<organism>
    <name type="scientific">Yarrowia lipolytica (strain CLIB 122 / E 150)</name>
    <name type="common">Yeast</name>
    <name type="synonym">Candida lipolytica</name>
    <dbReference type="NCBI Taxonomy" id="284591"/>
    <lineage>
        <taxon>Eukaryota</taxon>
        <taxon>Fungi</taxon>
        <taxon>Dikarya</taxon>
        <taxon>Ascomycota</taxon>
        <taxon>Saccharomycotina</taxon>
        <taxon>Dipodascomycetes</taxon>
        <taxon>Dipodascales</taxon>
        <taxon>Dipodascales incertae sedis</taxon>
        <taxon>Yarrowia</taxon>
    </lineage>
</organism>
<sequence>MSDINFMVVDGSLADLVAELTAYIETLGCDELEANCQRALAAGEEPKVFELITQQLPLLNKSSEQQFESVWQLCLHVFSFSESFEWVDAVLKAISGHSNLPRSFNGPAAAGQAVVAVLASLFNMLSSSHDDAQLANTLLAALTTAEETGNLHLLAGQLKSDQTVTWINTWQIEADVRDQLIAKIYSALVQLDEPAKALALLVAAVGNTQTSTFPMTCKLVQQALKSDHVYDFGSILALEPVEDLKTTEQRLFELLTTVASGEVAKMQSLAAGDAKSLIEENDFDAESLLAKTRVIALANLAAESPEIEYSIIAKNLDVSLDTVELWVIDTIRAGLVEGRLSQTKQSFAVHRAQKSGPIAKADWEVISQKLDVWKKSINDVLHVVKQARENANAQKRKIAA</sequence>
<comment type="function">
    <text evidence="1">Component of the eukaryotic translation initiation factor 3 (eIF-3) complex, which is involved in protein synthesis of a specialized repertoire of mRNAs and, together with other initiation factors, stimulates binding of mRNA and methionyl-tRNAi to the 40S ribosome. The eIF-3 complex specifically targets and initiates translation of a subset of mRNAs involved in cell proliferation.</text>
</comment>
<comment type="subunit">
    <text evidence="1">Component of the eukaryotic translation initiation factor 3 (eIF-3) complex.</text>
</comment>
<comment type="subcellular location">
    <subcellularLocation>
        <location evidence="1">Cytoplasm</location>
    </subcellularLocation>
</comment>
<comment type="similarity">
    <text evidence="1">Belongs to the eIF-3 subunit M family.</text>
</comment>
<reference key="1">
    <citation type="journal article" date="2004" name="Nature">
        <title>Genome evolution in yeasts.</title>
        <authorList>
            <person name="Dujon B."/>
            <person name="Sherman D."/>
            <person name="Fischer G."/>
            <person name="Durrens P."/>
            <person name="Casaregola S."/>
            <person name="Lafontaine I."/>
            <person name="de Montigny J."/>
            <person name="Marck C."/>
            <person name="Neuveglise C."/>
            <person name="Talla E."/>
            <person name="Goffard N."/>
            <person name="Frangeul L."/>
            <person name="Aigle M."/>
            <person name="Anthouard V."/>
            <person name="Babour A."/>
            <person name="Barbe V."/>
            <person name="Barnay S."/>
            <person name="Blanchin S."/>
            <person name="Beckerich J.-M."/>
            <person name="Beyne E."/>
            <person name="Bleykasten C."/>
            <person name="Boisrame A."/>
            <person name="Boyer J."/>
            <person name="Cattolico L."/>
            <person name="Confanioleri F."/>
            <person name="de Daruvar A."/>
            <person name="Despons L."/>
            <person name="Fabre E."/>
            <person name="Fairhead C."/>
            <person name="Ferry-Dumazet H."/>
            <person name="Groppi A."/>
            <person name="Hantraye F."/>
            <person name="Hennequin C."/>
            <person name="Jauniaux N."/>
            <person name="Joyet P."/>
            <person name="Kachouri R."/>
            <person name="Kerrest A."/>
            <person name="Koszul R."/>
            <person name="Lemaire M."/>
            <person name="Lesur I."/>
            <person name="Ma L."/>
            <person name="Muller H."/>
            <person name="Nicaud J.-M."/>
            <person name="Nikolski M."/>
            <person name="Oztas S."/>
            <person name="Ozier-Kalogeropoulos O."/>
            <person name="Pellenz S."/>
            <person name="Potier S."/>
            <person name="Richard G.-F."/>
            <person name="Straub M.-L."/>
            <person name="Suleau A."/>
            <person name="Swennen D."/>
            <person name="Tekaia F."/>
            <person name="Wesolowski-Louvel M."/>
            <person name="Westhof E."/>
            <person name="Wirth B."/>
            <person name="Zeniou-Meyer M."/>
            <person name="Zivanovic Y."/>
            <person name="Bolotin-Fukuhara M."/>
            <person name="Thierry A."/>
            <person name="Bouchier C."/>
            <person name="Caudron B."/>
            <person name="Scarpelli C."/>
            <person name="Gaillardin C."/>
            <person name="Weissenbach J."/>
            <person name="Wincker P."/>
            <person name="Souciet J.-L."/>
        </authorList>
    </citation>
    <scope>NUCLEOTIDE SEQUENCE [LARGE SCALE GENOMIC DNA]</scope>
    <source>
        <strain>CLIB 122 / E 150</strain>
    </source>
</reference>
<evidence type="ECO:0000255" key="1">
    <source>
        <dbReference type="HAMAP-Rule" id="MF_03012"/>
    </source>
</evidence>
<evidence type="ECO:0000255" key="2">
    <source>
        <dbReference type="PROSITE-ProRule" id="PRU01185"/>
    </source>
</evidence>
<keyword id="KW-0963">Cytoplasm</keyword>
<keyword id="KW-0396">Initiation factor</keyword>
<keyword id="KW-0648">Protein biosynthesis</keyword>
<keyword id="KW-1185">Reference proteome</keyword>
<name>EIF3M_YARLI</name>
<feature type="chain" id="PRO_0000366025" description="Eukaryotic translation initiation factor 3 subunit M">
    <location>
        <begin position="1"/>
        <end position="400"/>
    </location>
</feature>
<feature type="domain" description="PCI" evidence="2">
    <location>
        <begin position="180"/>
        <end position="354"/>
    </location>
</feature>
<proteinExistence type="inferred from homology"/>
<dbReference type="EMBL" id="CR382129">
    <property type="protein sequence ID" value="CAG82431.1"/>
    <property type="molecule type" value="Genomic_DNA"/>
</dbReference>
<dbReference type="RefSeq" id="XP_502111.1">
    <property type="nucleotide sequence ID" value="XM_502111.1"/>
</dbReference>
<dbReference type="SMR" id="Q6CB51"/>
<dbReference type="STRING" id="284591.Q6CB51"/>
<dbReference type="EnsemblFungi" id="CAG82431">
    <property type="protein sequence ID" value="CAG82431"/>
    <property type="gene ID" value="YALI0_C21890g"/>
</dbReference>
<dbReference type="KEGG" id="yli:2909812"/>
<dbReference type="VEuPathDB" id="FungiDB:YALI0_C21890g"/>
<dbReference type="HOGENOM" id="CLU_035254_0_1_1"/>
<dbReference type="InParanoid" id="Q6CB51"/>
<dbReference type="OMA" id="VCLKALW"/>
<dbReference type="OrthoDB" id="115352at4891"/>
<dbReference type="Proteomes" id="UP000001300">
    <property type="component" value="Chromosome C"/>
</dbReference>
<dbReference type="GO" id="GO:0016282">
    <property type="term" value="C:eukaryotic 43S preinitiation complex"/>
    <property type="evidence" value="ECO:0007669"/>
    <property type="project" value="UniProtKB-UniRule"/>
</dbReference>
<dbReference type="GO" id="GO:0033290">
    <property type="term" value="C:eukaryotic 48S preinitiation complex"/>
    <property type="evidence" value="ECO:0007669"/>
    <property type="project" value="UniProtKB-UniRule"/>
</dbReference>
<dbReference type="GO" id="GO:0005852">
    <property type="term" value="C:eukaryotic translation initiation factor 3 complex"/>
    <property type="evidence" value="ECO:0000318"/>
    <property type="project" value="GO_Central"/>
</dbReference>
<dbReference type="GO" id="GO:0071541">
    <property type="term" value="C:eukaryotic translation initiation factor 3 complex, eIF3m"/>
    <property type="evidence" value="ECO:0007669"/>
    <property type="project" value="UniProtKB-UniRule"/>
</dbReference>
<dbReference type="GO" id="GO:0003743">
    <property type="term" value="F:translation initiation factor activity"/>
    <property type="evidence" value="ECO:0007669"/>
    <property type="project" value="UniProtKB-UniRule"/>
</dbReference>
<dbReference type="GO" id="GO:0002183">
    <property type="term" value="P:cytoplasmic translational initiation"/>
    <property type="evidence" value="ECO:0000318"/>
    <property type="project" value="GO_Central"/>
</dbReference>
<dbReference type="GO" id="GO:0001732">
    <property type="term" value="P:formation of cytoplasmic translation initiation complex"/>
    <property type="evidence" value="ECO:0007669"/>
    <property type="project" value="UniProtKB-UniRule"/>
</dbReference>
<dbReference type="HAMAP" id="MF_03012">
    <property type="entry name" value="eIF3m"/>
    <property type="match status" value="1"/>
</dbReference>
<dbReference type="InterPro" id="IPR045237">
    <property type="entry name" value="COPS7/eIF3m"/>
</dbReference>
<dbReference type="InterPro" id="IPR027528">
    <property type="entry name" value="eIF3m"/>
</dbReference>
<dbReference type="InterPro" id="IPR000717">
    <property type="entry name" value="PCI_dom"/>
</dbReference>
<dbReference type="PANTHER" id="PTHR15350">
    <property type="entry name" value="COP9 SIGNALOSOME COMPLEX SUBUNIT 7/DENDRITIC CELL PROTEIN GA17"/>
    <property type="match status" value="1"/>
</dbReference>
<dbReference type="PANTHER" id="PTHR15350:SF2">
    <property type="entry name" value="EUKARYOTIC TRANSLATION INITIATION FACTOR 3 SUBUNIT M"/>
    <property type="match status" value="1"/>
</dbReference>
<dbReference type="Pfam" id="PF01399">
    <property type="entry name" value="PCI"/>
    <property type="match status" value="1"/>
</dbReference>
<dbReference type="SMART" id="SM00088">
    <property type="entry name" value="PINT"/>
    <property type="match status" value="1"/>
</dbReference>
<dbReference type="PROSITE" id="PS50250">
    <property type="entry name" value="PCI"/>
    <property type="match status" value="1"/>
</dbReference>
<gene>
    <name type="ordered locus">YALI0C21890g</name>
</gene>
<protein>
    <recommendedName>
        <fullName evidence="1">Eukaryotic translation initiation factor 3 subunit M</fullName>
        <shortName evidence="1">eIF3m</shortName>
    </recommendedName>
</protein>
<accession>Q6CB51</accession>